<keyword id="KW-1003">Cell membrane</keyword>
<keyword id="KW-0472">Membrane</keyword>
<keyword id="KW-1185">Reference proteome</keyword>
<reference key="1">
    <citation type="journal article" date="2005" name="J. Bacteriol.">
        <title>Complete genome sequence and analysis of the multiresistant nosocomial pathogen Corynebacterium jeikeium K411, a lipid-requiring bacterium of the human skin flora.</title>
        <authorList>
            <person name="Tauch A."/>
            <person name="Kaiser O."/>
            <person name="Hain T."/>
            <person name="Goesmann A."/>
            <person name="Weisshaar B."/>
            <person name="Albersmeier A."/>
            <person name="Bekel T."/>
            <person name="Bischoff N."/>
            <person name="Brune I."/>
            <person name="Chakraborty T."/>
            <person name="Kalinowski J."/>
            <person name="Meyer F."/>
            <person name="Rupp O."/>
            <person name="Schneiker S."/>
            <person name="Viehoever P."/>
            <person name="Puehler A."/>
        </authorList>
    </citation>
    <scope>NUCLEOTIDE SEQUENCE [LARGE SCALE GENOMIC DNA]</scope>
    <source>
        <strain>K411</strain>
    </source>
</reference>
<organism>
    <name type="scientific">Corynebacterium jeikeium (strain K411)</name>
    <dbReference type="NCBI Taxonomy" id="306537"/>
    <lineage>
        <taxon>Bacteria</taxon>
        <taxon>Bacillati</taxon>
        <taxon>Actinomycetota</taxon>
        <taxon>Actinomycetes</taxon>
        <taxon>Mycobacteriales</taxon>
        <taxon>Corynebacteriaceae</taxon>
        <taxon>Corynebacterium</taxon>
    </lineage>
</organism>
<proteinExistence type="inferred from homology"/>
<feature type="chain" id="PRO_0000253101" description="Putative membrane protein insertion efficiency factor">
    <location>
        <begin position="1"/>
        <end position="80"/>
    </location>
</feature>
<name>YIDD_CORJK</name>
<comment type="function">
    <text evidence="1">Could be involved in insertion of integral membrane proteins into the membrane.</text>
</comment>
<comment type="subcellular location">
    <subcellularLocation>
        <location evidence="1">Cell membrane</location>
        <topology evidence="1">Peripheral membrane protein</topology>
        <orientation evidence="1">Cytoplasmic side</orientation>
    </subcellularLocation>
</comment>
<comment type="similarity">
    <text evidence="1">Belongs to the UPF0161 family.</text>
</comment>
<gene>
    <name type="ordered locus">jk2102</name>
</gene>
<dbReference type="EMBL" id="CR931997">
    <property type="protein sequence ID" value="CAI38284.1"/>
    <property type="molecule type" value="Genomic_DNA"/>
</dbReference>
<dbReference type="RefSeq" id="WP_011274350.1">
    <property type="nucleotide sequence ID" value="NC_007164.1"/>
</dbReference>
<dbReference type="STRING" id="306537.jk2102"/>
<dbReference type="KEGG" id="cjk:jk2102"/>
<dbReference type="eggNOG" id="COG0759">
    <property type="taxonomic scope" value="Bacteria"/>
</dbReference>
<dbReference type="HOGENOM" id="CLU_144811_6_0_11"/>
<dbReference type="OrthoDB" id="9801753at2"/>
<dbReference type="Proteomes" id="UP000000545">
    <property type="component" value="Chromosome"/>
</dbReference>
<dbReference type="GO" id="GO:0005886">
    <property type="term" value="C:plasma membrane"/>
    <property type="evidence" value="ECO:0007669"/>
    <property type="project" value="UniProtKB-SubCell"/>
</dbReference>
<dbReference type="HAMAP" id="MF_00386">
    <property type="entry name" value="UPF0161_YidD"/>
    <property type="match status" value="1"/>
</dbReference>
<dbReference type="InterPro" id="IPR002696">
    <property type="entry name" value="Membr_insert_effic_factor_YidD"/>
</dbReference>
<dbReference type="NCBIfam" id="TIGR00278">
    <property type="entry name" value="membrane protein insertion efficiency factor YidD"/>
    <property type="match status" value="1"/>
</dbReference>
<dbReference type="PANTHER" id="PTHR33383">
    <property type="entry name" value="MEMBRANE PROTEIN INSERTION EFFICIENCY FACTOR-RELATED"/>
    <property type="match status" value="1"/>
</dbReference>
<dbReference type="PANTHER" id="PTHR33383:SF1">
    <property type="entry name" value="MEMBRANE PROTEIN INSERTION EFFICIENCY FACTOR-RELATED"/>
    <property type="match status" value="1"/>
</dbReference>
<dbReference type="Pfam" id="PF01809">
    <property type="entry name" value="YidD"/>
    <property type="match status" value="1"/>
</dbReference>
<dbReference type="SMART" id="SM01234">
    <property type="entry name" value="Haemolytic"/>
    <property type="match status" value="1"/>
</dbReference>
<sequence>MARRLILGYQSYLSPLKMGPTCRFEPTCSNYALIAISRHGLIKGSVLALGRLARCGPWHPGGWDPVPPRRPLCSWGGRRR</sequence>
<protein>
    <recommendedName>
        <fullName evidence="1">Putative membrane protein insertion efficiency factor</fullName>
    </recommendedName>
</protein>
<accession>Q4JSC3</accession>
<evidence type="ECO:0000255" key="1">
    <source>
        <dbReference type="HAMAP-Rule" id="MF_00386"/>
    </source>
</evidence>